<gene>
    <name evidence="1" type="primary">queF</name>
    <name type="ordered locus">LBJ_1924</name>
</gene>
<proteinExistence type="inferred from homology"/>
<accession>Q04RM8</accession>
<name>QUEF_LEPBJ</name>
<feature type="chain" id="PRO_1000062390" description="NADPH-dependent 7-cyano-7-deazaguanine reductase">
    <location>
        <begin position="1"/>
        <end position="133"/>
    </location>
</feature>
<feature type="active site" description="Thioimide intermediate" evidence="1">
    <location>
        <position position="49"/>
    </location>
</feature>
<feature type="active site" description="Proton donor" evidence="1">
    <location>
        <position position="56"/>
    </location>
</feature>
<feature type="binding site" evidence="1">
    <location>
        <begin position="71"/>
        <end position="73"/>
    </location>
    <ligand>
        <name>substrate</name>
    </ligand>
</feature>
<feature type="binding site" evidence="1">
    <location>
        <begin position="90"/>
        <end position="91"/>
    </location>
    <ligand>
        <name>substrate</name>
    </ligand>
</feature>
<reference key="1">
    <citation type="journal article" date="2006" name="Proc. Natl. Acad. Sci. U.S.A.">
        <title>Genome reduction in Leptospira borgpetersenii reflects limited transmission potential.</title>
        <authorList>
            <person name="Bulach D.M."/>
            <person name="Zuerner R.L."/>
            <person name="Wilson P."/>
            <person name="Seemann T."/>
            <person name="McGrath A."/>
            <person name="Cullen P.A."/>
            <person name="Davis J."/>
            <person name="Johnson M."/>
            <person name="Kuczek E."/>
            <person name="Alt D.P."/>
            <person name="Peterson-Burch B."/>
            <person name="Coppel R.L."/>
            <person name="Rood J.I."/>
            <person name="Davies J.K."/>
            <person name="Adler B."/>
        </authorList>
    </citation>
    <scope>NUCLEOTIDE SEQUENCE [LARGE SCALE GENOMIC DNA]</scope>
    <source>
        <strain>JB197</strain>
    </source>
</reference>
<sequence>MKTNHPETYDGRQDHIPSLKTPEIESFTNVYEGKDYTIDFTVPEFTAVCPKTGLPDFGVIYVSYVPTKRCIELKSFKEYILSYRNVGVFHEFLVNKIMEDLIAAIDPKYLKVIGDYNARGGIKTVVTREYNKI</sequence>
<dbReference type="EC" id="1.7.1.13" evidence="1"/>
<dbReference type="EMBL" id="CP000350">
    <property type="protein sequence ID" value="ABJ76442.1"/>
    <property type="molecule type" value="Genomic_DNA"/>
</dbReference>
<dbReference type="RefSeq" id="WP_002751062.1">
    <property type="nucleotide sequence ID" value="NC_008510.1"/>
</dbReference>
<dbReference type="SMR" id="Q04RM8"/>
<dbReference type="KEGG" id="lbj:LBJ_1924"/>
<dbReference type="HOGENOM" id="CLU_102489_1_0_12"/>
<dbReference type="UniPathway" id="UPA00392"/>
<dbReference type="Proteomes" id="UP000000656">
    <property type="component" value="Chromosome 1"/>
</dbReference>
<dbReference type="GO" id="GO:0005737">
    <property type="term" value="C:cytoplasm"/>
    <property type="evidence" value="ECO:0007669"/>
    <property type="project" value="UniProtKB-SubCell"/>
</dbReference>
<dbReference type="GO" id="GO:0033739">
    <property type="term" value="F:preQ1 synthase activity"/>
    <property type="evidence" value="ECO:0007669"/>
    <property type="project" value="UniProtKB-UniRule"/>
</dbReference>
<dbReference type="GO" id="GO:0008616">
    <property type="term" value="P:queuosine biosynthetic process"/>
    <property type="evidence" value="ECO:0007669"/>
    <property type="project" value="UniProtKB-UniRule"/>
</dbReference>
<dbReference type="GO" id="GO:0006400">
    <property type="term" value="P:tRNA modification"/>
    <property type="evidence" value="ECO:0007669"/>
    <property type="project" value="UniProtKB-UniRule"/>
</dbReference>
<dbReference type="Gene3D" id="3.30.1130.10">
    <property type="match status" value="1"/>
</dbReference>
<dbReference type="HAMAP" id="MF_00818">
    <property type="entry name" value="QueF_type1"/>
    <property type="match status" value="1"/>
</dbReference>
<dbReference type="InterPro" id="IPR043133">
    <property type="entry name" value="GTP-CH-I_C/QueF"/>
</dbReference>
<dbReference type="InterPro" id="IPR050084">
    <property type="entry name" value="NADPH_dep_7-cyano-7-deazaG_red"/>
</dbReference>
<dbReference type="InterPro" id="IPR029500">
    <property type="entry name" value="QueF"/>
</dbReference>
<dbReference type="InterPro" id="IPR016856">
    <property type="entry name" value="QueF_type1"/>
</dbReference>
<dbReference type="NCBIfam" id="TIGR03139">
    <property type="entry name" value="QueF-II"/>
    <property type="match status" value="1"/>
</dbReference>
<dbReference type="PANTHER" id="PTHR34354">
    <property type="entry name" value="NADPH-DEPENDENT 7-CYANO-7-DEAZAGUANINE REDUCTASE"/>
    <property type="match status" value="1"/>
</dbReference>
<dbReference type="PANTHER" id="PTHR34354:SF1">
    <property type="entry name" value="NADPH-DEPENDENT 7-CYANO-7-DEAZAGUANINE REDUCTASE"/>
    <property type="match status" value="1"/>
</dbReference>
<dbReference type="Pfam" id="PF14489">
    <property type="entry name" value="QueF"/>
    <property type="match status" value="1"/>
</dbReference>
<dbReference type="PIRSF" id="PIRSF027377">
    <property type="entry name" value="Nitrile_oxidored_QueF"/>
    <property type="match status" value="1"/>
</dbReference>
<dbReference type="SUPFAM" id="SSF55620">
    <property type="entry name" value="Tetrahydrobiopterin biosynthesis enzymes-like"/>
    <property type="match status" value="1"/>
</dbReference>
<protein>
    <recommendedName>
        <fullName evidence="1">NADPH-dependent 7-cyano-7-deazaguanine reductase</fullName>
        <ecNumber evidence="1">1.7.1.13</ecNumber>
    </recommendedName>
    <alternativeName>
        <fullName evidence="1">7-cyano-7-carbaguanine reductase</fullName>
    </alternativeName>
    <alternativeName>
        <fullName evidence="1">NADPH-dependent nitrile oxidoreductase</fullName>
    </alternativeName>
    <alternativeName>
        <fullName evidence="1">PreQ(0) reductase</fullName>
    </alternativeName>
</protein>
<comment type="function">
    <text evidence="1">Catalyzes the NADPH-dependent reduction of 7-cyano-7-deazaguanine (preQ0) to 7-aminomethyl-7-deazaguanine (preQ1).</text>
</comment>
<comment type="catalytic activity">
    <reaction evidence="1">
        <text>7-aminomethyl-7-carbaguanine + 2 NADP(+) = 7-cyano-7-deazaguanine + 2 NADPH + 3 H(+)</text>
        <dbReference type="Rhea" id="RHEA:13409"/>
        <dbReference type="ChEBI" id="CHEBI:15378"/>
        <dbReference type="ChEBI" id="CHEBI:45075"/>
        <dbReference type="ChEBI" id="CHEBI:57783"/>
        <dbReference type="ChEBI" id="CHEBI:58349"/>
        <dbReference type="ChEBI" id="CHEBI:58703"/>
        <dbReference type="EC" id="1.7.1.13"/>
    </reaction>
</comment>
<comment type="pathway">
    <text evidence="1">tRNA modification; tRNA-queuosine biosynthesis.</text>
</comment>
<comment type="subcellular location">
    <subcellularLocation>
        <location evidence="1">Cytoplasm</location>
    </subcellularLocation>
</comment>
<comment type="similarity">
    <text evidence="1">Belongs to the GTP cyclohydrolase I family. QueF type 1 subfamily.</text>
</comment>
<keyword id="KW-0963">Cytoplasm</keyword>
<keyword id="KW-0521">NADP</keyword>
<keyword id="KW-0560">Oxidoreductase</keyword>
<keyword id="KW-0671">Queuosine biosynthesis</keyword>
<organism>
    <name type="scientific">Leptospira borgpetersenii serovar Hardjo-bovis (strain JB197)</name>
    <dbReference type="NCBI Taxonomy" id="355277"/>
    <lineage>
        <taxon>Bacteria</taxon>
        <taxon>Pseudomonadati</taxon>
        <taxon>Spirochaetota</taxon>
        <taxon>Spirochaetia</taxon>
        <taxon>Leptospirales</taxon>
        <taxon>Leptospiraceae</taxon>
        <taxon>Leptospira</taxon>
    </lineage>
</organism>
<evidence type="ECO:0000255" key="1">
    <source>
        <dbReference type="HAMAP-Rule" id="MF_00818"/>
    </source>
</evidence>